<evidence type="ECO:0000250" key="1">
    <source>
        <dbReference type="UniProtKB" id="P39210"/>
    </source>
</evidence>
<evidence type="ECO:0000255" key="2"/>
<evidence type="ECO:0000269" key="3">
    <source>
    </source>
</evidence>
<evidence type="ECO:0000269" key="4">
    <source>
    </source>
</evidence>
<evidence type="ECO:0000305" key="5"/>
<evidence type="ECO:0000312" key="6">
    <source>
        <dbReference type="Proteomes" id="UP000000437"/>
    </source>
</evidence>
<proteinExistence type="evidence at transcript level"/>
<reference key="1">
    <citation type="journal article" date="2013" name="Nature">
        <title>The zebrafish reference genome sequence and its relationship to the human genome.</title>
        <authorList>
            <person name="Howe K."/>
            <person name="Clark M.D."/>
            <person name="Torroja C.F."/>
            <person name="Torrance J."/>
            <person name="Berthelot C."/>
            <person name="Muffato M."/>
            <person name="Collins J.E."/>
            <person name="Humphray S."/>
            <person name="McLaren K."/>
            <person name="Matthews L."/>
            <person name="McLaren S."/>
            <person name="Sealy I."/>
            <person name="Caccamo M."/>
            <person name="Churcher C."/>
            <person name="Scott C."/>
            <person name="Barrett J.C."/>
            <person name="Koch R."/>
            <person name="Rauch G.J."/>
            <person name="White S."/>
            <person name="Chow W."/>
            <person name="Kilian B."/>
            <person name="Quintais L.T."/>
            <person name="Guerra-Assuncao J.A."/>
            <person name="Zhou Y."/>
            <person name="Gu Y."/>
            <person name="Yen J."/>
            <person name="Vogel J.H."/>
            <person name="Eyre T."/>
            <person name="Redmond S."/>
            <person name="Banerjee R."/>
            <person name="Chi J."/>
            <person name="Fu B."/>
            <person name="Langley E."/>
            <person name="Maguire S.F."/>
            <person name="Laird G.K."/>
            <person name="Lloyd D."/>
            <person name="Kenyon E."/>
            <person name="Donaldson S."/>
            <person name="Sehra H."/>
            <person name="Almeida-King J."/>
            <person name="Loveland J."/>
            <person name="Trevanion S."/>
            <person name="Jones M."/>
            <person name="Quail M."/>
            <person name="Willey D."/>
            <person name="Hunt A."/>
            <person name="Burton J."/>
            <person name="Sims S."/>
            <person name="McLay K."/>
            <person name="Plumb B."/>
            <person name="Davis J."/>
            <person name="Clee C."/>
            <person name="Oliver K."/>
            <person name="Clark R."/>
            <person name="Riddle C."/>
            <person name="Elliot D."/>
            <person name="Threadgold G."/>
            <person name="Harden G."/>
            <person name="Ware D."/>
            <person name="Begum S."/>
            <person name="Mortimore B."/>
            <person name="Kerry G."/>
            <person name="Heath P."/>
            <person name="Phillimore B."/>
            <person name="Tracey A."/>
            <person name="Corby N."/>
            <person name="Dunn M."/>
            <person name="Johnson C."/>
            <person name="Wood J."/>
            <person name="Clark S."/>
            <person name="Pelan S."/>
            <person name="Griffiths G."/>
            <person name="Smith M."/>
            <person name="Glithero R."/>
            <person name="Howden P."/>
            <person name="Barker N."/>
            <person name="Lloyd C."/>
            <person name="Stevens C."/>
            <person name="Harley J."/>
            <person name="Holt K."/>
            <person name="Panagiotidis G."/>
            <person name="Lovell J."/>
            <person name="Beasley H."/>
            <person name="Henderson C."/>
            <person name="Gordon D."/>
            <person name="Auger K."/>
            <person name="Wright D."/>
            <person name="Collins J."/>
            <person name="Raisen C."/>
            <person name="Dyer L."/>
            <person name="Leung K."/>
            <person name="Robertson L."/>
            <person name="Ambridge K."/>
            <person name="Leongamornlert D."/>
            <person name="McGuire S."/>
            <person name="Gilderthorp R."/>
            <person name="Griffiths C."/>
            <person name="Manthravadi D."/>
            <person name="Nichol S."/>
            <person name="Barker G."/>
            <person name="Whitehead S."/>
            <person name="Kay M."/>
            <person name="Brown J."/>
            <person name="Murnane C."/>
            <person name="Gray E."/>
            <person name="Humphries M."/>
            <person name="Sycamore N."/>
            <person name="Barker D."/>
            <person name="Saunders D."/>
            <person name="Wallis J."/>
            <person name="Babbage A."/>
            <person name="Hammond S."/>
            <person name="Mashreghi-Mohammadi M."/>
            <person name="Barr L."/>
            <person name="Martin S."/>
            <person name="Wray P."/>
            <person name="Ellington A."/>
            <person name="Matthews N."/>
            <person name="Ellwood M."/>
            <person name="Woodmansey R."/>
            <person name="Clark G."/>
            <person name="Cooper J."/>
            <person name="Tromans A."/>
            <person name="Grafham D."/>
            <person name="Skuce C."/>
            <person name="Pandian R."/>
            <person name="Andrews R."/>
            <person name="Harrison E."/>
            <person name="Kimberley A."/>
            <person name="Garnett J."/>
            <person name="Fosker N."/>
            <person name="Hall R."/>
            <person name="Garner P."/>
            <person name="Kelly D."/>
            <person name="Bird C."/>
            <person name="Palmer S."/>
            <person name="Gehring I."/>
            <person name="Berger A."/>
            <person name="Dooley C.M."/>
            <person name="Ersan-Urun Z."/>
            <person name="Eser C."/>
            <person name="Geiger H."/>
            <person name="Geisler M."/>
            <person name="Karotki L."/>
            <person name="Kirn A."/>
            <person name="Konantz J."/>
            <person name="Konantz M."/>
            <person name="Oberlander M."/>
            <person name="Rudolph-Geiger S."/>
            <person name="Teucke M."/>
            <person name="Lanz C."/>
            <person name="Raddatz G."/>
            <person name="Osoegawa K."/>
            <person name="Zhu B."/>
            <person name="Rapp A."/>
            <person name="Widaa S."/>
            <person name="Langford C."/>
            <person name="Yang F."/>
            <person name="Schuster S.C."/>
            <person name="Carter N.P."/>
            <person name="Harrow J."/>
            <person name="Ning Z."/>
            <person name="Herrero J."/>
            <person name="Searle S.M."/>
            <person name="Enright A."/>
            <person name="Geisler R."/>
            <person name="Plasterk R.H."/>
            <person name="Lee C."/>
            <person name="Westerfield M."/>
            <person name="de Jong P.J."/>
            <person name="Zon L.I."/>
            <person name="Postlethwait J.H."/>
            <person name="Nusslein-Volhard C."/>
            <person name="Hubbard T.J."/>
            <person name="Roest Crollius H."/>
            <person name="Rogers J."/>
            <person name="Stemple D.L."/>
        </authorList>
    </citation>
    <scope>NUCLEOTIDE SEQUENCE [LARGE SCALE GENOMIC DNA]</scope>
    <source>
        <strain>Tuebingen</strain>
    </source>
</reference>
<reference key="2">
    <citation type="submission" date="2003-07" db="EMBL/GenBank/DDBJ databases">
        <authorList>
            <consortium name="NIH - Zebrafish Gene Collection (ZGC) project"/>
        </authorList>
    </citation>
    <scope>NUCLEOTIDE SEQUENCE [LARGE SCALE MRNA]</scope>
    <source>
        <strain>AB</strain>
    </source>
</reference>
<reference key="3">
    <citation type="journal article" date="2013" name="Biol. Open">
        <title>transparent, a gene affecting stripe formation in Zebrafish, encodes the mitochondrial protein Mpv17 that is required for iridophore survival.</title>
        <authorList>
            <person name="Krauss J."/>
            <person name="Astrinidis P."/>
            <person name="Astrinides P."/>
            <person name="Frohnhoefer H.G."/>
            <person name="Walderich B."/>
            <person name="Nuesslein-Volhard C."/>
        </authorList>
    </citation>
    <scope>SUBCELLULAR LOCATION</scope>
    <scope>DISEASE</scope>
    <scope>TISSUE SPECIFICITY</scope>
</reference>
<reference key="4">
    <citation type="journal article" date="2019" name="Dis. Model. Mech.">
        <title>The zebrafish orthologue of the human hepatocerebral disease gene MPV17 plays pleiotropic roles in mitochondria.</title>
        <authorList>
            <person name="Martorano L."/>
            <person name="Peron M."/>
            <person name="Laquatra C."/>
            <person name="Lidron E."/>
            <person name="Facchinello N."/>
            <person name="Meneghetti G."/>
            <person name="Tiso N."/>
            <person name="Rasola A."/>
            <person name="Ghezzi D."/>
            <person name="Argenton F."/>
        </authorList>
    </citation>
    <scope>FUNCTION</scope>
    <scope>DISEASE</scope>
</reference>
<accession>Q5TZ51</accession>
<accession>Q7SY33</accession>
<protein>
    <recommendedName>
        <fullName evidence="5">Mitochondrial inner membrane protein Mpv17</fullName>
    </recommendedName>
    <alternativeName>
        <fullName evidence="5">Protein Mpv17</fullName>
    </alternativeName>
</protein>
<organism evidence="6">
    <name type="scientific">Danio rerio</name>
    <name type="common">Zebrafish</name>
    <name type="synonym">Brachydanio rerio</name>
    <dbReference type="NCBI Taxonomy" id="7955"/>
    <lineage>
        <taxon>Eukaryota</taxon>
        <taxon>Metazoa</taxon>
        <taxon>Chordata</taxon>
        <taxon>Craniata</taxon>
        <taxon>Vertebrata</taxon>
        <taxon>Euteleostomi</taxon>
        <taxon>Actinopterygii</taxon>
        <taxon>Neopterygii</taxon>
        <taxon>Teleostei</taxon>
        <taxon>Ostariophysi</taxon>
        <taxon>Cypriniformes</taxon>
        <taxon>Danionidae</taxon>
        <taxon>Danioninae</taxon>
        <taxon>Danio</taxon>
    </lineage>
</organism>
<gene>
    <name type="primary">mpv17</name>
    <name type="ORF">zgc:63573</name>
</gene>
<name>MPV17_DANRE</name>
<dbReference type="EMBL" id="BX510372">
    <property type="protein sequence ID" value="CAH68940.1"/>
    <property type="molecule type" value="Genomic_DNA"/>
</dbReference>
<dbReference type="EMBL" id="BC055143">
    <property type="protein sequence ID" value="AAH55143.1"/>
    <property type="status" value="ALT_INIT"/>
    <property type="molecule type" value="mRNA"/>
</dbReference>
<dbReference type="RefSeq" id="NP_957459.2">
    <property type="nucleotide sequence ID" value="NM_201165.2"/>
</dbReference>
<dbReference type="FunCoup" id="Q5TZ51">
    <property type="interactions" value="1086"/>
</dbReference>
<dbReference type="STRING" id="7955.ENSDARP00000114374"/>
<dbReference type="TCDB" id="1.A.126.1.4">
    <property type="family name" value="the mpv17/pmp22 4 tms putative channel (mpv17) family"/>
</dbReference>
<dbReference type="PaxDb" id="7955-ENSDARP00000114374"/>
<dbReference type="Ensembl" id="ENSDART00000146544">
    <property type="protein sequence ID" value="ENSDARP00000114374"/>
    <property type="gene ID" value="ENSDARG00000032431"/>
</dbReference>
<dbReference type="GeneID" id="394140"/>
<dbReference type="KEGG" id="dre:394140"/>
<dbReference type="AGR" id="ZFIN:ZDB-GENE-040426-1168"/>
<dbReference type="CTD" id="4358"/>
<dbReference type="ZFIN" id="ZDB-GENE-040426-1168">
    <property type="gene designation" value="mpv17"/>
</dbReference>
<dbReference type="eggNOG" id="KOG1944">
    <property type="taxonomic scope" value="Eukaryota"/>
</dbReference>
<dbReference type="HOGENOM" id="CLU_049109_8_3_1"/>
<dbReference type="InParanoid" id="Q5TZ51"/>
<dbReference type="OMA" id="WYQSKLA"/>
<dbReference type="OrthoDB" id="430207at2759"/>
<dbReference type="PhylomeDB" id="Q5TZ51"/>
<dbReference type="TreeFam" id="TF324070"/>
<dbReference type="PRO" id="PR:Q5TZ51"/>
<dbReference type="Proteomes" id="UP000000437">
    <property type="component" value="Chromosome 20"/>
</dbReference>
<dbReference type="Bgee" id="ENSDARG00000032431">
    <property type="expression patterns" value="Expressed in mature ovarian follicle and 25 other cell types or tissues"/>
</dbReference>
<dbReference type="GO" id="GO:0005737">
    <property type="term" value="C:cytoplasm"/>
    <property type="evidence" value="ECO:0000318"/>
    <property type="project" value="GO_Central"/>
</dbReference>
<dbReference type="GO" id="GO:0005743">
    <property type="term" value="C:mitochondrial inner membrane"/>
    <property type="evidence" value="ECO:0007669"/>
    <property type="project" value="UniProtKB-SubCell"/>
</dbReference>
<dbReference type="GO" id="GO:0005739">
    <property type="term" value="C:mitochondrion"/>
    <property type="evidence" value="ECO:0000318"/>
    <property type="project" value="GO_Central"/>
</dbReference>
<dbReference type="GO" id="GO:0015267">
    <property type="term" value="F:channel activity"/>
    <property type="evidence" value="ECO:0000318"/>
    <property type="project" value="GO_Central"/>
</dbReference>
<dbReference type="GO" id="GO:0048066">
    <property type="term" value="P:developmental pigmentation"/>
    <property type="evidence" value="ECO:0000315"/>
    <property type="project" value="ZFIN"/>
</dbReference>
<dbReference type="GO" id="GO:0050935">
    <property type="term" value="P:iridophore differentiation"/>
    <property type="evidence" value="ECO:0000315"/>
    <property type="project" value="ZFIN"/>
</dbReference>
<dbReference type="GO" id="GO:0001889">
    <property type="term" value="P:liver development"/>
    <property type="evidence" value="ECO:0000315"/>
    <property type="project" value="ZFIN"/>
</dbReference>
<dbReference type="GO" id="GO:1901858">
    <property type="term" value="P:regulation of mitochondrial DNA metabolic process"/>
    <property type="evidence" value="ECO:0000318"/>
    <property type="project" value="GO_Central"/>
</dbReference>
<dbReference type="GO" id="GO:0010821">
    <property type="term" value="P:regulation of mitochondrion organization"/>
    <property type="evidence" value="ECO:0000315"/>
    <property type="project" value="ZFIN"/>
</dbReference>
<dbReference type="GO" id="GO:0048742">
    <property type="term" value="P:regulation of skeletal muscle fiber development"/>
    <property type="evidence" value="ECO:0000315"/>
    <property type="project" value="ZFIN"/>
</dbReference>
<dbReference type="GO" id="GO:0090207">
    <property type="term" value="P:regulation of triglyceride metabolic process"/>
    <property type="evidence" value="ECO:0000315"/>
    <property type="project" value="ZFIN"/>
</dbReference>
<dbReference type="GO" id="GO:0006225">
    <property type="term" value="P:UDP biosynthetic process"/>
    <property type="evidence" value="ECO:0000315"/>
    <property type="project" value="ZFIN"/>
</dbReference>
<dbReference type="InterPro" id="IPR007248">
    <property type="entry name" value="Mpv17_PMP22"/>
</dbReference>
<dbReference type="PANTHER" id="PTHR11266">
    <property type="entry name" value="PEROXISOMAL MEMBRANE PROTEIN 2, PXMP2 MPV17"/>
    <property type="match status" value="1"/>
</dbReference>
<dbReference type="PANTHER" id="PTHR11266:SF17">
    <property type="entry name" value="PROTEIN MPV17"/>
    <property type="match status" value="1"/>
</dbReference>
<dbReference type="Pfam" id="PF04117">
    <property type="entry name" value="Mpv17_PMP22"/>
    <property type="match status" value="1"/>
</dbReference>
<comment type="function">
    <text evidence="1 4">Involved in mitochondrial homeostasis, and control of oxidative phosphorylation and mitochondrial DNA (mtDNA) maintenance (PubMed:30833296). Non-selective channel that modulates the membrane potential under normal conditions and oxidative stress (By similarity).</text>
</comment>
<comment type="subcellular location">
    <subcellularLocation>
        <location evidence="3">Mitochondrion inner membrane</location>
        <topology evidence="3">Multi-pass membrane protein</topology>
    </subcellularLocation>
</comment>
<comment type="tissue specificity">
    <text evidence="3">Widely expressed.</text>
</comment>
<comment type="disease">
    <text evidence="3 4">Genetic defects resulting in MPV17 loss are responsible for the transparent (tra) mutant phenotype. 'tra' fishes display pigmentation abnormalities and lack of cells derived from the neural crest, such as iridophores and, at later stages of development, melanophores (PubMed:23862018). MPV17-null larvae show disruption of mitochondrial ultrastructure in liver cells with mitochondrial ballooning and disappearance of cristae, and impaired oxidative phosphorylation, insufficient pyrimidine synthesis, and mtDNA depletion (PubMed:30833296).</text>
</comment>
<comment type="similarity">
    <text evidence="5">Belongs to the peroxisomal membrane protein PXMP2/4 family.</text>
</comment>
<comment type="sequence caution" evidence="5">
    <conflict type="erroneous initiation">
        <sequence resource="EMBL-CDS" id="AAH55143"/>
    </conflict>
</comment>
<keyword id="KW-0472">Membrane</keyword>
<keyword id="KW-0496">Mitochondrion</keyword>
<keyword id="KW-0999">Mitochondrion inner membrane</keyword>
<keyword id="KW-1185">Reference proteome</keyword>
<keyword id="KW-0812">Transmembrane</keyword>
<keyword id="KW-1133">Transmembrane helix</keyword>
<feature type="chain" id="PRO_0000234400" description="Mitochondrial inner membrane protein Mpv17">
    <location>
        <begin position="1"/>
        <end position="177"/>
    </location>
</feature>
<feature type="transmembrane region" description="Helical" evidence="2">
    <location>
        <begin position="19"/>
        <end position="39"/>
    </location>
</feature>
<feature type="transmembrane region" description="Helical" evidence="2">
    <location>
        <begin position="55"/>
        <end position="75"/>
    </location>
</feature>
<feature type="transmembrane region" description="Helical" evidence="2">
    <location>
        <begin position="95"/>
        <end position="115"/>
    </location>
</feature>
<feature type="transmembrane region" description="Helical" evidence="2">
    <location>
        <begin position="132"/>
        <end position="152"/>
    </location>
</feature>
<feature type="site" description="Determines ion selectivity" evidence="1">
    <location>
        <position position="93"/>
    </location>
</feature>
<feature type="sequence conflict" description="In Ref. 2; AAH55143." evidence="5" ref="2">
    <original>I</original>
    <variation>L</variation>
    <location>
        <position position="22"/>
    </location>
</feature>
<feature type="sequence conflict" description="In Ref. 2; AAH55143." evidence="5" ref="2">
    <original>F</original>
    <variation>L</variation>
    <location>
        <position position="61"/>
    </location>
</feature>
<sequence length="177" mass="19672">MAGLWRSYQALMAKHPWKVQIITAGSLVGVGDVISQQLIERRGLANHNARRTAKMMSIGFFFVGPVVGGWYKVLDKLVTGGTKSAALKKMLVDQVGFAPCFLGAFLGITGTLNGLTVEENVAKLQRDYTDALISNYYLWPPVQIANFYFIPLHHRLAVVQIVAVVWNSYLSWKANKM</sequence>